<proteinExistence type="evidence at transcript level"/>
<feature type="chain" id="PRO_0000150779" description="Olfactory receptor 52I2">
    <location>
        <begin position="1"/>
        <end position="350"/>
    </location>
</feature>
<feature type="topological domain" description="Extracellular" evidence="1">
    <location>
        <begin position="1"/>
        <end position="55"/>
    </location>
</feature>
<feature type="transmembrane region" description="Helical; Name=1" evidence="1">
    <location>
        <begin position="56"/>
        <end position="76"/>
    </location>
</feature>
<feature type="topological domain" description="Cytoplasmic" evidence="1">
    <location>
        <begin position="77"/>
        <end position="84"/>
    </location>
</feature>
<feature type="transmembrane region" description="Helical; Name=2" evidence="1">
    <location>
        <begin position="85"/>
        <end position="105"/>
    </location>
</feature>
<feature type="topological domain" description="Extracellular" evidence="1">
    <location>
        <begin position="106"/>
        <end position="129"/>
    </location>
</feature>
<feature type="transmembrane region" description="Helical; Name=3" evidence="1">
    <location>
        <begin position="130"/>
        <end position="150"/>
    </location>
</feature>
<feature type="topological domain" description="Cytoplasmic" evidence="1">
    <location>
        <begin position="151"/>
        <end position="169"/>
    </location>
</feature>
<feature type="transmembrane region" description="Helical; Name=4" evidence="1">
    <location>
        <begin position="170"/>
        <end position="190"/>
    </location>
</feature>
<feature type="topological domain" description="Extracellular" evidence="1">
    <location>
        <begin position="191"/>
        <end position="226"/>
    </location>
</feature>
<feature type="transmembrane region" description="Helical; Name=5" evidence="1">
    <location>
        <begin position="227"/>
        <end position="247"/>
    </location>
</feature>
<feature type="topological domain" description="Cytoplasmic" evidence="1">
    <location>
        <begin position="248"/>
        <end position="267"/>
    </location>
</feature>
<feature type="transmembrane region" description="Helical; Name=6" evidence="1">
    <location>
        <begin position="268"/>
        <end position="288"/>
    </location>
</feature>
<feature type="topological domain" description="Extracellular" evidence="1">
    <location>
        <begin position="289"/>
        <end position="304"/>
    </location>
</feature>
<feature type="transmembrane region" description="Helical; Name=7" evidence="1">
    <location>
        <begin position="305"/>
        <end position="325"/>
    </location>
</feature>
<feature type="topological domain" description="Cytoplasmic" evidence="1">
    <location>
        <begin position="326"/>
        <end position="350"/>
    </location>
</feature>
<feature type="glycosylation site" description="N-linked (GlcNAc...) asparagine" evidence="1">
    <location>
        <position position="33"/>
    </location>
</feature>
<feature type="disulfide bond" evidence="2">
    <location>
        <begin position="127"/>
        <end position="219"/>
    </location>
</feature>
<feature type="sequence variant" id="VAR_048082" description="In dbSNP:rs7128702.">
    <original>L</original>
    <variation>P</variation>
    <location>
        <position position="25"/>
    </location>
</feature>
<feature type="sequence variant" id="VAR_048083" description="In dbSNP:rs12793957." evidence="3">
    <original>I</original>
    <variation>L</variation>
    <location>
        <position position="74"/>
    </location>
</feature>
<feature type="sequence variant" id="VAR_048084" description="In dbSNP:rs1847632.">
    <original>T</original>
    <variation>M</variation>
    <location>
        <position position="167"/>
    </location>
</feature>
<feature type="sequence variant" id="VAR_048085" description="In dbSNP:rs7947426.">
    <original>I</original>
    <variation>V</variation>
    <location>
        <position position="178"/>
    </location>
</feature>
<feature type="sequence variant" id="VAR_048086" description="In dbSNP:rs7947432.">
    <original>I</original>
    <variation>V</variation>
    <location>
        <position position="183"/>
    </location>
</feature>
<sequence length="350" mass="38353">MCQQILRDCILLIHHLCINRKKVSLVMLGPAYNHTMETPASFLLVGIPGLQSSHLWLAISLSAMYIIALLGNTIIVTAIWMDSTRHEPMYCFLCVLAAVDIVMASSVVPKMVSIFCSGDSSISFSACFTQMFFVHLATAVETGLLLTMAFDRYVAICKPLHYKRILTPQVMLGMSMAITIRAIIAITPLSWMVSHLPFCGSNVVVHSYCEHIALARLACADPVPSSLYSLIGSSLMVGSDVAFIAASYILILKAVFGLSSKTAQLKALSTCGSHVGVMALYYLPGMASIYAAWLGQDVVPLHTQVLLADLYVIIPATLNPIIYGMRTKQLRERIWSYLMHVLFDHSNLGS</sequence>
<keyword id="KW-1003">Cell membrane</keyword>
<keyword id="KW-1015">Disulfide bond</keyword>
<keyword id="KW-0297">G-protein coupled receptor</keyword>
<keyword id="KW-0325">Glycoprotein</keyword>
<keyword id="KW-0472">Membrane</keyword>
<keyword id="KW-0552">Olfaction</keyword>
<keyword id="KW-0675">Receptor</keyword>
<keyword id="KW-1185">Reference proteome</keyword>
<keyword id="KW-0716">Sensory transduction</keyword>
<keyword id="KW-0807">Transducer</keyword>
<keyword id="KW-0812">Transmembrane</keyword>
<keyword id="KW-1133">Transmembrane helix</keyword>
<name>O52I2_HUMAN</name>
<protein>
    <recommendedName>
        <fullName>Olfactory receptor 52I2</fullName>
    </recommendedName>
    <alternativeName>
        <fullName>Olfactory receptor OR11-12</fullName>
    </alternativeName>
</protein>
<accession>Q8NH67</accession>
<accession>B2RNJ5</accession>
<accession>B9EKV8</accession>
<accession>Q6IFJ8</accession>
<dbReference type="EMBL" id="AB065522">
    <property type="protein sequence ID" value="BAC05770.1"/>
    <property type="status" value="ALT_INIT"/>
    <property type="molecule type" value="Genomic_DNA"/>
</dbReference>
<dbReference type="EMBL" id="BC136921">
    <property type="protein sequence ID" value="AAI36922.1"/>
    <property type="molecule type" value="mRNA"/>
</dbReference>
<dbReference type="EMBL" id="BC151144">
    <property type="protein sequence ID" value="AAI51145.1"/>
    <property type="molecule type" value="mRNA"/>
</dbReference>
<dbReference type="EMBL" id="BK004264">
    <property type="protein sequence ID" value="DAA04662.1"/>
    <property type="molecule type" value="Genomic_DNA"/>
</dbReference>
<dbReference type="RefSeq" id="NP_001005170.1">
    <property type="nucleotide sequence ID" value="NM_001005170.2"/>
</dbReference>
<dbReference type="SMR" id="Q8NH67"/>
<dbReference type="FunCoup" id="Q8NH67">
    <property type="interactions" value="448"/>
</dbReference>
<dbReference type="STRING" id="9606.ENSP00000308764"/>
<dbReference type="GlyCosmos" id="Q8NH67">
    <property type="glycosylation" value="1 site, No reported glycans"/>
</dbReference>
<dbReference type="GlyGen" id="Q8NH67">
    <property type="glycosylation" value="1 site"/>
</dbReference>
<dbReference type="iPTMnet" id="Q8NH67"/>
<dbReference type="PhosphoSitePlus" id="Q8NH67"/>
<dbReference type="BioMuta" id="OR52I2"/>
<dbReference type="DMDM" id="218512129"/>
<dbReference type="PaxDb" id="9606-ENSP00000308764"/>
<dbReference type="TopDownProteomics" id="Q8NH67"/>
<dbReference type="Antibodypedia" id="57459">
    <property type="antibodies" value="76 antibodies from 18 providers"/>
</dbReference>
<dbReference type="DNASU" id="143502"/>
<dbReference type="GeneID" id="143502"/>
<dbReference type="KEGG" id="hsa:143502"/>
<dbReference type="UCSC" id="uc010qyh.2">
    <property type="organism name" value="human"/>
</dbReference>
<dbReference type="AGR" id="HGNC:15221"/>
<dbReference type="CTD" id="143502"/>
<dbReference type="GeneCards" id="OR52I2"/>
<dbReference type="HGNC" id="HGNC:15221">
    <property type="gene designation" value="OR52I2"/>
</dbReference>
<dbReference type="neXtProt" id="NX_Q8NH67"/>
<dbReference type="PharmGKB" id="PA32413"/>
<dbReference type="VEuPathDB" id="HostDB:ENSG00000226288"/>
<dbReference type="eggNOG" id="ENOG502SX3E">
    <property type="taxonomic scope" value="Eukaryota"/>
</dbReference>
<dbReference type="HOGENOM" id="CLU_012526_0_0_1"/>
<dbReference type="InParanoid" id="Q8NH67"/>
<dbReference type="OrthoDB" id="5969463at2759"/>
<dbReference type="PAN-GO" id="Q8NH67">
    <property type="GO annotations" value="0 GO annotations based on evolutionary models"/>
</dbReference>
<dbReference type="PhylomeDB" id="Q8NH67"/>
<dbReference type="TreeFam" id="TF343679"/>
<dbReference type="PathwayCommons" id="Q8NH67"/>
<dbReference type="Reactome" id="R-HSA-9752946">
    <property type="pathway name" value="Expression and translocation of olfactory receptors"/>
</dbReference>
<dbReference type="BioGRID-ORCS" id="143502">
    <property type="hits" value="15 hits in 680 CRISPR screens"/>
</dbReference>
<dbReference type="GeneWiki" id="OR52I2"/>
<dbReference type="GenomeRNAi" id="143502"/>
<dbReference type="Pharos" id="Q8NH67">
    <property type="development level" value="Tdark"/>
</dbReference>
<dbReference type="PRO" id="PR:Q8NH67"/>
<dbReference type="Proteomes" id="UP000005640">
    <property type="component" value="Chromosome 11"/>
</dbReference>
<dbReference type="RNAct" id="Q8NH67">
    <property type="molecule type" value="protein"/>
</dbReference>
<dbReference type="GO" id="GO:0005886">
    <property type="term" value="C:plasma membrane"/>
    <property type="evidence" value="ECO:0000318"/>
    <property type="project" value="GO_Central"/>
</dbReference>
<dbReference type="GO" id="GO:0004930">
    <property type="term" value="F:G protein-coupled receptor activity"/>
    <property type="evidence" value="ECO:0007669"/>
    <property type="project" value="UniProtKB-KW"/>
</dbReference>
<dbReference type="GO" id="GO:0004984">
    <property type="term" value="F:olfactory receptor activity"/>
    <property type="evidence" value="ECO:0000318"/>
    <property type="project" value="GO_Central"/>
</dbReference>
<dbReference type="FunFam" id="1.20.1070.10:FF:000006">
    <property type="entry name" value="Olfactory receptor"/>
    <property type="match status" value="1"/>
</dbReference>
<dbReference type="Gene3D" id="1.20.1070.10">
    <property type="entry name" value="Rhodopsin 7-helix transmembrane proteins"/>
    <property type="match status" value="1"/>
</dbReference>
<dbReference type="InterPro" id="IPR000276">
    <property type="entry name" value="GPCR_Rhodpsn"/>
</dbReference>
<dbReference type="InterPro" id="IPR017452">
    <property type="entry name" value="GPCR_Rhodpsn_7TM"/>
</dbReference>
<dbReference type="InterPro" id="IPR000725">
    <property type="entry name" value="Olfact_rcpt"/>
</dbReference>
<dbReference type="InterPro" id="IPR050402">
    <property type="entry name" value="OR51/52/56-like"/>
</dbReference>
<dbReference type="PANTHER" id="PTHR26450:SF177">
    <property type="entry name" value="OLFACTORY RECEPTOR 52I1-RELATED"/>
    <property type="match status" value="1"/>
</dbReference>
<dbReference type="PANTHER" id="PTHR26450">
    <property type="entry name" value="OLFACTORY RECEPTOR 56B1-RELATED"/>
    <property type="match status" value="1"/>
</dbReference>
<dbReference type="Pfam" id="PF13853">
    <property type="entry name" value="7tm_4"/>
    <property type="match status" value="1"/>
</dbReference>
<dbReference type="PRINTS" id="PR00237">
    <property type="entry name" value="GPCRRHODOPSN"/>
</dbReference>
<dbReference type="PRINTS" id="PR00245">
    <property type="entry name" value="OLFACTORYR"/>
</dbReference>
<dbReference type="SUPFAM" id="SSF81321">
    <property type="entry name" value="Family A G protein-coupled receptor-like"/>
    <property type="match status" value="1"/>
</dbReference>
<dbReference type="PROSITE" id="PS00237">
    <property type="entry name" value="G_PROTEIN_RECEP_F1_1"/>
    <property type="match status" value="1"/>
</dbReference>
<dbReference type="PROSITE" id="PS50262">
    <property type="entry name" value="G_PROTEIN_RECEP_F1_2"/>
    <property type="match status" value="1"/>
</dbReference>
<comment type="function">
    <text evidence="4">Odorant receptor.</text>
</comment>
<comment type="subcellular location">
    <subcellularLocation>
        <location>Cell membrane</location>
        <topology>Multi-pass membrane protein</topology>
    </subcellularLocation>
</comment>
<comment type="similarity">
    <text evidence="2">Belongs to the G-protein coupled receptor 1 family.</text>
</comment>
<comment type="caution">
    <text evidence="4">It is uncertain whether Met-1 or Met-27 is the initiator.</text>
</comment>
<comment type="sequence caution" evidence="4">
    <conflict type="erroneous initiation">
        <sequence resource="EMBL-CDS" id="BAC05770"/>
    </conflict>
</comment>
<comment type="online information" name="Human Olfactory Receptor Data Exploratorium (HORDE)">
    <link uri="http://genome.weizmann.ac.il/horde/card/index/symbol:OR52I2"/>
</comment>
<gene>
    <name type="primary">OR52I2</name>
</gene>
<organism>
    <name type="scientific">Homo sapiens</name>
    <name type="common">Human</name>
    <dbReference type="NCBI Taxonomy" id="9606"/>
    <lineage>
        <taxon>Eukaryota</taxon>
        <taxon>Metazoa</taxon>
        <taxon>Chordata</taxon>
        <taxon>Craniata</taxon>
        <taxon>Vertebrata</taxon>
        <taxon>Euteleostomi</taxon>
        <taxon>Mammalia</taxon>
        <taxon>Eutheria</taxon>
        <taxon>Euarchontoglires</taxon>
        <taxon>Primates</taxon>
        <taxon>Haplorrhini</taxon>
        <taxon>Catarrhini</taxon>
        <taxon>Hominidae</taxon>
        <taxon>Homo</taxon>
    </lineage>
</organism>
<reference key="1">
    <citation type="submission" date="2001-07" db="EMBL/GenBank/DDBJ databases">
        <title>Genome-wide discovery and analysis of human seven transmembrane helix receptor genes.</title>
        <authorList>
            <person name="Suwa M."/>
            <person name="Sato T."/>
            <person name="Okouchi I."/>
            <person name="Arita M."/>
            <person name="Futami K."/>
            <person name="Matsumoto S."/>
            <person name="Tsutsumi S."/>
            <person name="Aburatani H."/>
            <person name="Asai K."/>
            <person name="Akiyama Y."/>
        </authorList>
    </citation>
    <scope>NUCLEOTIDE SEQUENCE [GENOMIC DNA]</scope>
</reference>
<reference key="2">
    <citation type="journal article" date="2004" name="Genome Res.">
        <title>The status, quality, and expansion of the NIH full-length cDNA project: the Mammalian Gene Collection (MGC).</title>
        <authorList>
            <consortium name="The MGC Project Team"/>
        </authorList>
    </citation>
    <scope>NUCLEOTIDE SEQUENCE [LARGE SCALE MRNA]</scope>
    <scope>VARIANT LEU-74</scope>
    <source>
        <tissue>Testis</tissue>
    </source>
</reference>
<reference key="3">
    <citation type="journal article" date="2004" name="Proc. Natl. Acad. Sci. U.S.A.">
        <title>The human olfactory receptor gene family.</title>
        <authorList>
            <person name="Malnic B."/>
            <person name="Godfrey P.A."/>
            <person name="Buck L.B."/>
        </authorList>
    </citation>
    <scope>IDENTIFICATION</scope>
</reference>
<reference key="4">
    <citation type="journal article" date="2004" name="Proc. Natl. Acad. Sci. U.S.A.">
        <authorList>
            <person name="Malnic B."/>
            <person name="Godfrey P.A."/>
            <person name="Buck L.B."/>
        </authorList>
    </citation>
    <scope>ERRATUM OF PUBMED:14983052</scope>
</reference>
<evidence type="ECO:0000255" key="1"/>
<evidence type="ECO:0000255" key="2">
    <source>
        <dbReference type="PROSITE-ProRule" id="PRU00521"/>
    </source>
</evidence>
<evidence type="ECO:0000269" key="3">
    <source>
    </source>
</evidence>
<evidence type="ECO:0000305" key="4"/>